<accession>Q5WUG0</accession>
<proteinExistence type="inferred from homology"/>
<sequence length="467" mass="53256">MTEVFTIKQCLDGEISIDETVTVRGWVKTRRDSKAGLSFISLHDGSCFSPIQIVATDQLSNYQKEVTKLTAGCSMIATGKLVASQGKGQFFEIQAESIEVVGWVENPDTYPIQAKRHTLEFLREVAHLRPRTNTISAVTRVRHSLAQAIHRFYHEQGFFWVHTPIITASDCEGAGEMFRVSTLDLLNIPKNDKGQIDFSKDFFGRETFLTVSGQLNVEAYCMAMSKVYTFGPTFRAENSNTSRHLAEFWMIEPEIAFANLEDICKLSQNMLRYLCKTVLEERSDDMDFFNQFVAPGCIERMEHIADSEFEIMTYTDAIKALEASEQKFEFPVSWGLDLQSEHERYLAEVLCKKPVIVTNYPQEIKGFYMRLNDDGKTVAAMDVLAPGIGEIIGGSQREERLEILDRRMDECNLNKEHYQWYRDLRRYGTVPHAGFGLGFERLISYVTGVSNVRDVIPFPRTPGHADY</sequence>
<comment type="catalytic activity">
    <reaction evidence="1">
        <text>tRNA(Asn) + L-asparagine + ATP = L-asparaginyl-tRNA(Asn) + AMP + diphosphate + H(+)</text>
        <dbReference type="Rhea" id="RHEA:11180"/>
        <dbReference type="Rhea" id="RHEA-COMP:9659"/>
        <dbReference type="Rhea" id="RHEA-COMP:9674"/>
        <dbReference type="ChEBI" id="CHEBI:15378"/>
        <dbReference type="ChEBI" id="CHEBI:30616"/>
        <dbReference type="ChEBI" id="CHEBI:33019"/>
        <dbReference type="ChEBI" id="CHEBI:58048"/>
        <dbReference type="ChEBI" id="CHEBI:78442"/>
        <dbReference type="ChEBI" id="CHEBI:78515"/>
        <dbReference type="ChEBI" id="CHEBI:456215"/>
        <dbReference type="EC" id="6.1.1.22"/>
    </reaction>
</comment>
<comment type="subunit">
    <text evidence="1">Homodimer.</text>
</comment>
<comment type="subcellular location">
    <subcellularLocation>
        <location evidence="1">Cytoplasm</location>
    </subcellularLocation>
</comment>
<comment type="similarity">
    <text evidence="1">Belongs to the class-II aminoacyl-tRNA synthetase family.</text>
</comment>
<protein>
    <recommendedName>
        <fullName evidence="1">Asparagine--tRNA ligase</fullName>
        <ecNumber evidence="1">6.1.1.22</ecNumber>
    </recommendedName>
    <alternativeName>
        <fullName evidence="1">Asparaginyl-tRNA synthetase</fullName>
        <shortName evidence="1">AsnRS</shortName>
    </alternativeName>
</protein>
<gene>
    <name evidence="1" type="primary">asnS</name>
    <name type="ordered locus">lpl2208</name>
</gene>
<feature type="chain" id="PRO_1000211905" description="Asparagine--tRNA ligase">
    <location>
        <begin position="1"/>
        <end position="467"/>
    </location>
</feature>
<name>SYN_LEGPL</name>
<organism>
    <name type="scientific">Legionella pneumophila (strain Lens)</name>
    <dbReference type="NCBI Taxonomy" id="297245"/>
    <lineage>
        <taxon>Bacteria</taxon>
        <taxon>Pseudomonadati</taxon>
        <taxon>Pseudomonadota</taxon>
        <taxon>Gammaproteobacteria</taxon>
        <taxon>Legionellales</taxon>
        <taxon>Legionellaceae</taxon>
        <taxon>Legionella</taxon>
    </lineage>
</organism>
<evidence type="ECO:0000255" key="1">
    <source>
        <dbReference type="HAMAP-Rule" id="MF_00534"/>
    </source>
</evidence>
<dbReference type="EC" id="6.1.1.22" evidence="1"/>
<dbReference type="EMBL" id="CR628337">
    <property type="protein sequence ID" value="CAH16448.1"/>
    <property type="molecule type" value="Genomic_DNA"/>
</dbReference>
<dbReference type="RefSeq" id="WP_011216184.1">
    <property type="nucleotide sequence ID" value="NC_006369.1"/>
</dbReference>
<dbReference type="SMR" id="Q5WUG0"/>
<dbReference type="KEGG" id="lpf:lpl2208"/>
<dbReference type="LegioList" id="lpl2208"/>
<dbReference type="HOGENOM" id="CLU_004553_2_0_6"/>
<dbReference type="Proteomes" id="UP000002517">
    <property type="component" value="Chromosome"/>
</dbReference>
<dbReference type="GO" id="GO:0005737">
    <property type="term" value="C:cytoplasm"/>
    <property type="evidence" value="ECO:0007669"/>
    <property type="project" value="UniProtKB-SubCell"/>
</dbReference>
<dbReference type="GO" id="GO:0004816">
    <property type="term" value="F:asparagine-tRNA ligase activity"/>
    <property type="evidence" value="ECO:0007669"/>
    <property type="project" value="UniProtKB-UniRule"/>
</dbReference>
<dbReference type="GO" id="GO:0005524">
    <property type="term" value="F:ATP binding"/>
    <property type="evidence" value="ECO:0007669"/>
    <property type="project" value="UniProtKB-UniRule"/>
</dbReference>
<dbReference type="GO" id="GO:0003676">
    <property type="term" value="F:nucleic acid binding"/>
    <property type="evidence" value="ECO:0007669"/>
    <property type="project" value="InterPro"/>
</dbReference>
<dbReference type="GO" id="GO:0006421">
    <property type="term" value="P:asparaginyl-tRNA aminoacylation"/>
    <property type="evidence" value="ECO:0007669"/>
    <property type="project" value="UniProtKB-UniRule"/>
</dbReference>
<dbReference type="CDD" id="cd00776">
    <property type="entry name" value="AsxRS_core"/>
    <property type="match status" value="1"/>
</dbReference>
<dbReference type="CDD" id="cd04318">
    <property type="entry name" value="EcAsnRS_like_N"/>
    <property type="match status" value="1"/>
</dbReference>
<dbReference type="FunFam" id="3.30.930.10:FF:000016">
    <property type="entry name" value="Asparagine--tRNA ligase"/>
    <property type="match status" value="1"/>
</dbReference>
<dbReference type="Gene3D" id="3.30.930.10">
    <property type="entry name" value="Bira Bifunctional Protein, Domain 2"/>
    <property type="match status" value="1"/>
</dbReference>
<dbReference type="Gene3D" id="2.40.50.140">
    <property type="entry name" value="Nucleic acid-binding proteins"/>
    <property type="match status" value="1"/>
</dbReference>
<dbReference type="HAMAP" id="MF_00534">
    <property type="entry name" value="Asn_tRNA_synth"/>
    <property type="match status" value="1"/>
</dbReference>
<dbReference type="InterPro" id="IPR004364">
    <property type="entry name" value="Aa-tRNA-synt_II"/>
</dbReference>
<dbReference type="InterPro" id="IPR006195">
    <property type="entry name" value="aa-tRNA-synth_II"/>
</dbReference>
<dbReference type="InterPro" id="IPR045864">
    <property type="entry name" value="aa-tRNA-synth_II/BPL/LPL"/>
</dbReference>
<dbReference type="InterPro" id="IPR004522">
    <property type="entry name" value="Asn-tRNA-ligase"/>
</dbReference>
<dbReference type="InterPro" id="IPR002312">
    <property type="entry name" value="Asp/Asn-tRNA-synth_IIb"/>
</dbReference>
<dbReference type="InterPro" id="IPR012340">
    <property type="entry name" value="NA-bd_OB-fold"/>
</dbReference>
<dbReference type="InterPro" id="IPR004365">
    <property type="entry name" value="NA-bd_OB_tRNA"/>
</dbReference>
<dbReference type="NCBIfam" id="TIGR00457">
    <property type="entry name" value="asnS"/>
    <property type="match status" value="1"/>
</dbReference>
<dbReference type="NCBIfam" id="NF003037">
    <property type="entry name" value="PRK03932.1"/>
    <property type="match status" value="1"/>
</dbReference>
<dbReference type="PANTHER" id="PTHR22594:SF34">
    <property type="entry name" value="ASPARAGINE--TRNA LIGASE, MITOCHONDRIAL-RELATED"/>
    <property type="match status" value="1"/>
</dbReference>
<dbReference type="PANTHER" id="PTHR22594">
    <property type="entry name" value="ASPARTYL/LYSYL-TRNA SYNTHETASE"/>
    <property type="match status" value="1"/>
</dbReference>
<dbReference type="Pfam" id="PF00152">
    <property type="entry name" value="tRNA-synt_2"/>
    <property type="match status" value="1"/>
</dbReference>
<dbReference type="Pfam" id="PF01336">
    <property type="entry name" value="tRNA_anti-codon"/>
    <property type="match status" value="1"/>
</dbReference>
<dbReference type="PRINTS" id="PR01042">
    <property type="entry name" value="TRNASYNTHASP"/>
</dbReference>
<dbReference type="SUPFAM" id="SSF55681">
    <property type="entry name" value="Class II aaRS and biotin synthetases"/>
    <property type="match status" value="1"/>
</dbReference>
<dbReference type="SUPFAM" id="SSF50249">
    <property type="entry name" value="Nucleic acid-binding proteins"/>
    <property type="match status" value="1"/>
</dbReference>
<dbReference type="PROSITE" id="PS50862">
    <property type="entry name" value="AA_TRNA_LIGASE_II"/>
    <property type="match status" value="1"/>
</dbReference>
<reference key="1">
    <citation type="journal article" date="2004" name="Nat. Genet.">
        <title>Evidence in the Legionella pneumophila genome for exploitation of host cell functions and high genome plasticity.</title>
        <authorList>
            <person name="Cazalet C."/>
            <person name="Rusniok C."/>
            <person name="Brueggemann H."/>
            <person name="Zidane N."/>
            <person name="Magnier A."/>
            <person name="Ma L."/>
            <person name="Tichit M."/>
            <person name="Jarraud S."/>
            <person name="Bouchier C."/>
            <person name="Vandenesch F."/>
            <person name="Kunst F."/>
            <person name="Etienne J."/>
            <person name="Glaser P."/>
            <person name="Buchrieser C."/>
        </authorList>
    </citation>
    <scope>NUCLEOTIDE SEQUENCE [LARGE SCALE GENOMIC DNA]</scope>
    <source>
        <strain>Lens</strain>
    </source>
</reference>
<keyword id="KW-0030">Aminoacyl-tRNA synthetase</keyword>
<keyword id="KW-0067">ATP-binding</keyword>
<keyword id="KW-0963">Cytoplasm</keyword>
<keyword id="KW-0436">Ligase</keyword>
<keyword id="KW-0547">Nucleotide-binding</keyword>
<keyword id="KW-0648">Protein biosynthesis</keyword>